<protein>
    <recommendedName>
        <fullName evidence="4">Cyclotide cter-H</fullName>
    </recommendedName>
</protein>
<dbReference type="SMR" id="P86848"/>
<dbReference type="GO" id="GO:0006952">
    <property type="term" value="P:defense response"/>
    <property type="evidence" value="ECO:0007669"/>
    <property type="project" value="UniProtKB-KW"/>
</dbReference>
<dbReference type="InterPro" id="IPR005535">
    <property type="entry name" value="Cyclotide"/>
</dbReference>
<dbReference type="InterPro" id="IPR012323">
    <property type="entry name" value="Cyclotide_bracelet_CS"/>
</dbReference>
<dbReference type="InterPro" id="IPR036146">
    <property type="entry name" value="Cyclotide_sf"/>
</dbReference>
<dbReference type="Pfam" id="PF03784">
    <property type="entry name" value="Cyclotide"/>
    <property type="match status" value="1"/>
</dbReference>
<dbReference type="PIRSF" id="PIRSF037891">
    <property type="entry name" value="Cycloviolacin"/>
    <property type="match status" value="1"/>
</dbReference>
<dbReference type="SUPFAM" id="SSF57038">
    <property type="entry name" value="Cyclotides"/>
    <property type="match status" value="1"/>
</dbReference>
<dbReference type="PROSITE" id="PS51052">
    <property type="entry name" value="CYCLOTIDE"/>
    <property type="match status" value="1"/>
</dbReference>
<dbReference type="PROSITE" id="PS60008">
    <property type="entry name" value="CYCLOTIDE_BRACELET"/>
    <property type="match status" value="1"/>
</dbReference>
<comment type="function">
    <text evidence="1 2">Probably participates in a plant defense mechanism.</text>
</comment>
<comment type="domain">
    <text evidence="5">The presence of a 'disulfide through disulfide knot' structurally defines this protein as a knottin.</text>
</comment>
<comment type="PTM">
    <text evidence="3">Contains 3 disulfide bonds.</text>
</comment>
<comment type="PTM">
    <text evidence="2 3">This is a cyclic peptide.</text>
</comment>
<comment type="mass spectrometry" mass="3127.43" method="Electrospray" evidence="3"/>
<comment type="similarity">
    <text evidence="2">Belongs to the cyclotide family. Bracelet subfamily.</text>
</comment>
<comment type="caution">
    <text evidence="5">This peptide is cyclic. The start position was chosen by similarity to cyclotide cter-A for which the DNA sequence is known.</text>
</comment>
<name>CYCH_CLITE</name>
<reference evidence="5" key="1">
    <citation type="journal article" date="2011" name="ACS Chem. Biol.">
        <title>The discovery of cyclotides in the Fabaceae plant family provides new insights into the cyclization, evolution and distribution of circular proteins.</title>
        <authorList>
            <person name="Poth A.G."/>
            <person name="Colgrave M.L."/>
            <person name="Philip R."/>
            <person name="Kerenga B."/>
            <person name="Daly N.L."/>
            <person name="Anderson M."/>
            <person name="Craik D.J."/>
        </authorList>
    </citation>
    <scope>PROTEIN SEQUENCE</scope>
    <scope>DISULFIDE BONDS</scope>
    <scope>CYCLIZATION</scope>
    <scope>MASS SPECTROMETRY</scope>
    <source>
        <tissue evidence="3">Seed</tissue>
    </source>
</reference>
<proteinExistence type="evidence at protein level"/>
<keyword id="KW-0903">Direct protein sequencing</keyword>
<keyword id="KW-1015">Disulfide bond</keyword>
<keyword id="KW-0960">Knottin</keyword>
<keyword id="KW-0611">Plant defense</keyword>
<feature type="peptide" id="PRO_0000405859" description="Cyclotide cter-H" evidence="2 3">
    <location>
        <begin position="1"/>
        <end position="30"/>
    </location>
</feature>
<feature type="disulfide bond" evidence="1 2">
    <location>
        <begin position="4"/>
        <end position="20"/>
    </location>
</feature>
<feature type="disulfide bond" evidence="1 2">
    <location>
        <begin position="8"/>
        <end position="22"/>
    </location>
</feature>
<feature type="disulfide bond" evidence="1 2">
    <location>
        <begin position="13"/>
        <end position="27"/>
    </location>
</feature>
<feature type="cross-link" description="Cyclopeptide (Gly-Asp)" evidence="4">
    <location>
        <begin position="1"/>
        <end position="30"/>
    </location>
</feature>
<sequence length="30" mass="3154">GLPCGESCVFIPCITTVVGCSCKNKVCYND</sequence>
<organism>
    <name type="scientific">Clitoria ternatea</name>
    <name type="common">Butterfly pea</name>
    <dbReference type="NCBI Taxonomy" id="43366"/>
    <lineage>
        <taxon>Eukaryota</taxon>
        <taxon>Viridiplantae</taxon>
        <taxon>Streptophyta</taxon>
        <taxon>Embryophyta</taxon>
        <taxon>Tracheophyta</taxon>
        <taxon>Spermatophyta</taxon>
        <taxon>Magnoliopsida</taxon>
        <taxon>eudicotyledons</taxon>
        <taxon>Gunneridae</taxon>
        <taxon>Pentapetalae</taxon>
        <taxon>rosids</taxon>
        <taxon>fabids</taxon>
        <taxon>Fabales</taxon>
        <taxon>Fabaceae</taxon>
        <taxon>Papilionoideae</taxon>
        <taxon>50 kb inversion clade</taxon>
        <taxon>NPAAA clade</taxon>
        <taxon>indigoferoid/millettioid clade</taxon>
        <taxon>Phaseoleae</taxon>
        <taxon>Clitoria</taxon>
    </lineage>
</organism>
<accession>P86848</accession>
<evidence type="ECO:0000250" key="1">
    <source>
        <dbReference type="UniProtKB" id="P56254"/>
    </source>
</evidence>
<evidence type="ECO:0000255" key="2">
    <source>
        <dbReference type="PROSITE-ProRule" id="PRU00395"/>
    </source>
</evidence>
<evidence type="ECO:0000269" key="3">
    <source>
    </source>
</evidence>
<evidence type="ECO:0000303" key="4">
    <source>
    </source>
</evidence>
<evidence type="ECO:0000305" key="5"/>